<comment type="function">
    <text evidence="1">Catalyzes the reversible conversion of 2-phosphoglycerate (2-PG) into phosphoenolpyruvate (PEP). It is essential for the degradation of carbohydrates via glycolysis.</text>
</comment>
<comment type="catalytic activity">
    <reaction evidence="1">
        <text>(2R)-2-phosphoglycerate = phosphoenolpyruvate + H2O</text>
        <dbReference type="Rhea" id="RHEA:10164"/>
        <dbReference type="ChEBI" id="CHEBI:15377"/>
        <dbReference type="ChEBI" id="CHEBI:58289"/>
        <dbReference type="ChEBI" id="CHEBI:58702"/>
        <dbReference type="EC" id="4.2.1.11"/>
    </reaction>
</comment>
<comment type="cofactor">
    <cofactor evidence="1">
        <name>Mg(2+)</name>
        <dbReference type="ChEBI" id="CHEBI:18420"/>
    </cofactor>
    <text evidence="1">Binds a second Mg(2+) ion via substrate during catalysis.</text>
</comment>
<comment type="pathway">
    <text evidence="1">Carbohydrate degradation; glycolysis; pyruvate from D-glyceraldehyde 3-phosphate: step 4/5.</text>
</comment>
<comment type="subcellular location">
    <subcellularLocation>
        <location evidence="1">Cytoplasm</location>
    </subcellularLocation>
    <subcellularLocation>
        <location evidence="1">Secreted</location>
    </subcellularLocation>
    <subcellularLocation>
        <location evidence="1">Cell surface</location>
    </subcellularLocation>
    <text evidence="1">Fractions of enolase are present in both the cytoplasm and on the cell surface.</text>
</comment>
<comment type="similarity">
    <text evidence="1">Belongs to the enolase family.</text>
</comment>
<organism>
    <name type="scientific">Picrophilus torridus (strain ATCC 700027 / DSM 9790 / JCM 10055 / NBRC 100828 / KAW 2/3)</name>
    <dbReference type="NCBI Taxonomy" id="1122961"/>
    <lineage>
        <taxon>Archaea</taxon>
        <taxon>Methanobacteriati</taxon>
        <taxon>Thermoplasmatota</taxon>
        <taxon>Thermoplasmata</taxon>
        <taxon>Thermoplasmatales</taxon>
        <taxon>Picrophilaceae</taxon>
        <taxon>Picrophilus</taxon>
    </lineage>
</organism>
<keyword id="KW-0963">Cytoplasm</keyword>
<keyword id="KW-0324">Glycolysis</keyword>
<keyword id="KW-0456">Lyase</keyword>
<keyword id="KW-0460">Magnesium</keyword>
<keyword id="KW-0479">Metal-binding</keyword>
<keyword id="KW-0964">Secreted</keyword>
<name>ENO_PICTO</name>
<gene>
    <name evidence="1" type="primary">eno</name>
    <name type="ordered locus">PTO1234</name>
</gene>
<reference key="1">
    <citation type="journal article" date="2004" name="Proc. Natl. Acad. Sci. U.S.A.">
        <title>Genome sequence of Picrophilus torridus and its implications for life around pH 0.</title>
        <authorList>
            <person name="Fuetterer O."/>
            <person name="Angelov A."/>
            <person name="Liesegang H."/>
            <person name="Gottschalk G."/>
            <person name="Schleper C."/>
            <person name="Schepers B."/>
            <person name="Dock C."/>
            <person name="Antranikian G."/>
            <person name="Liebl W."/>
        </authorList>
    </citation>
    <scope>NUCLEOTIDE SEQUENCE [LARGE SCALE GENOMIC DNA]</scope>
    <source>
        <strain>ATCC 700027 / DSM 9790 / JCM 10055 / NBRC 100828 / KAW 2/3</strain>
    </source>
</reference>
<feature type="chain" id="PRO_0000280883" description="Enolase">
    <location>
        <begin position="1"/>
        <end position="400"/>
    </location>
</feature>
<feature type="active site" description="Proton donor" evidence="1">
    <location>
        <position position="197"/>
    </location>
</feature>
<feature type="active site" description="Proton acceptor" evidence="1">
    <location>
        <position position="326"/>
    </location>
</feature>
<feature type="binding site" evidence="1">
    <location>
        <position position="154"/>
    </location>
    <ligand>
        <name>(2R)-2-phosphoglycerate</name>
        <dbReference type="ChEBI" id="CHEBI:58289"/>
    </ligand>
</feature>
<feature type="binding site" evidence="1">
    <location>
        <position position="233"/>
    </location>
    <ligand>
        <name>Mg(2+)</name>
        <dbReference type="ChEBI" id="CHEBI:18420"/>
    </ligand>
</feature>
<feature type="binding site" evidence="1">
    <location>
        <position position="274"/>
    </location>
    <ligand>
        <name>Mg(2+)</name>
        <dbReference type="ChEBI" id="CHEBI:18420"/>
    </ligand>
</feature>
<feature type="binding site" evidence="1">
    <location>
        <position position="301"/>
    </location>
    <ligand>
        <name>Mg(2+)</name>
        <dbReference type="ChEBI" id="CHEBI:18420"/>
    </ligand>
</feature>
<feature type="binding site" evidence="1">
    <location>
        <position position="326"/>
    </location>
    <ligand>
        <name>(2R)-2-phosphoglycerate</name>
        <dbReference type="ChEBI" id="CHEBI:58289"/>
    </ligand>
</feature>
<feature type="binding site" evidence="1">
    <location>
        <position position="355"/>
    </location>
    <ligand>
        <name>(2R)-2-phosphoglycerate</name>
        <dbReference type="ChEBI" id="CHEBI:58289"/>
    </ligand>
</feature>
<feature type="binding site" evidence="1">
    <location>
        <position position="356"/>
    </location>
    <ligand>
        <name>(2R)-2-phosphoglycerate</name>
        <dbReference type="ChEBI" id="CHEBI:58289"/>
    </ligand>
</feature>
<feature type="binding site" evidence="1">
    <location>
        <position position="377"/>
    </location>
    <ligand>
        <name>(2R)-2-phosphoglycerate</name>
        <dbReference type="ChEBI" id="CHEBI:58289"/>
    </ligand>
</feature>
<accession>Q6KZN3</accession>
<protein>
    <recommendedName>
        <fullName evidence="1">Enolase</fullName>
        <ecNumber evidence="1">4.2.1.11</ecNumber>
    </recommendedName>
    <alternativeName>
        <fullName evidence="1">2-phospho-D-glycerate hydro-lyase</fullName>
    </alternativeName>
    <alternativeName>
        <fullName evidence="1">2-phosphoglycerate dehydratase</fullName>
    </alternativeName>
</protein>
<dbReference type="EC" id="4.2.1.11" evidence="1"/>
<dbReference type="EMBL" id="AE017261">
    <property type="protein sequence ID" value="AAT43819.1"/>
    <property type="molecule type" value="Genomic_DNA"/>
</dbReference>
<dbReference type="RefSeq" id="WP_011178035.1">
    <property type="nucleotide sequence ID" value="NC_005877.1"/>
</dbReference>
<dbReference type="SMR" id="Q6KZN3"/>
<dbReference type="FunCoup" id="Q6KZN3">
    <property type="interactions" value="177"/>
</dbReference>
<dbReference type="STRING" id="263820.PTO1234"/>
<dbReference type="PaxDb" id="263820-PTO1234"/>
<dbReference type="GeneID" id="2844318"/>
<dbReference type="KEGG" id="pto:PTO1234"/>
<dbReference type="PATRIC" id="fig|263820.9.peg.1282"/>
<dbReference type="eggNOG" id="arCOG01169">
    <property type="taxonomic scope" value="Archaea"/>
</dbReference>
<dbReference type="HOGENOM" id="CLU_031223_0_1_2"/>
<dbReference type="InParanoid" id="Q6KZN3"/>
<dbReference type="OrthoDB" id="8680at2157"/>
<dbReference type="UniPathway" id="UPA00109">
    <property type="reaction ID" value="UER00187"/>
</dbReference>
<dbReference type="Proteomes" id="UP000000438">
    <property type="component" value="Chromosome"/>
</dbReference>
<dbReference type="GO" id="GO:0009986">
    <property type="term" value="C:cell surface"/>
    <property type="evidence" value="ECO:0007669"/>
    <property type="project" value="UniProtKB-SubCell"/>
</dbReference>
<dbReference type="GO" id="GO:0005576">
    <property type="term" value="C:extracellular region"/>
    <property type="evidence" value="ECO:0007669"/>
    <property type="project" value="UniProtKB-SubCell"/>
</dbReference>
<dbReference type="GO" id="GO:0000015">
    <property type="term" value="C:phosphopyruvate hydratase complex"/>
    <property type="evidence" value="ECO:0007669"/>
    <property type="project" value="InterPro"/>
</dbReference>
<dbReference type="GO" id="GO:0000287">
    <property type="term" value="F:magnesium ion binding"/>
    <property type="evidence" value="ECO:0007669"/>
    <property type="project" value="UniProtKB-UniRule"/>
</dbReference>
<dbReference type="GO" id="GO:0004634">
    <property type="term" value="F:phosphopyruvate hydratase activity"/>
    <property type="evidence" value="ECO:0007669"/>
    <property type="project" value="UniProtKB-UniRule"/>
</dbReference>
<dbReference type="GO" id="GO:0006096">
    <property type="term" value="P:glycolytic process"/>
    <property type="evidence" value="ECO:0007669"/>
    <property type="project" value="UniProtKB-UniRule"/>
</dbReference>
<dbReference type="CDD" id="cd03313">
    <property type="entry name" value="enolase"/>
    <property type="match status" value="1"/>
</dbReference>
<dbReference type="Gene3D" id="3.20.20.120">
    <property type="entry name" value="Enolase-like C-terminal domain"/>
    <property type="match status" value="1"/>
</dbReference>
<dbReference type="Gene3D" id="3.30.390.10">
    <property type="entry name" value="Enolase-like, N-terminal domain"/>
    <property type="match status" value="1"/>
</dbReference>
<dbReference type="HAMAP" id="MF_00318">
    <property type="entry name" value="Enolase"/>
    <property type="match status" value="1"/>
</dbReference>
<dbReference type="InterPro" id="IPR000941">
    <property type="entry name" value="Enolase"/>
</dbReference>
<dbReference type="InterPro" id="IPR036849">
    <property type="entry name" value="Enolase-like_C_sf"/>
</dbReference>
<dbReference type="InterPro" id="IPR029017">
    <property type="entry name" value="Enolase-like_N"/>
</dbReference>
<dbReference type="InterPro" id="IPR020810">
    <property type="entry name" value="Enolase_C"/>
</dbReference>
<dbReference type="InterPro" id="IPR020809">
    <property type="entry name" value="Enolase_CS"/>
</dbReference>
<dbReference type="InterPro" id="IPR020811">
    <property type="entry name" value="Enolase_N"/>
</dbReference>
<dbReference type="PANTHER" id="PTHR11902">
    <property type="entry name" value="ENOLASE"/>
    <property type="match status" value="1"/>
</dbReference>
<dbReference type="PANTHER" id="PTHR11902:SF1">
    <property type="entry name" value="ENOLASE"/>
    <property type="match status" value="1"/>
</dbReference>
<dbReference type="Pfam" id="PF00113">
    <property type="entry name" value="Enolase_C"/>
    <property type="match status" value="1"/>
</dbReference>
<dbReference type="Pfam" id="PF03952">
    <property type="entry name" value="Enolase_N"/>
    <property type="match status" value="1"/>
</dbReference>
<dbReference type="PIRSF" id="PIRSF001400">
    <property type="entry name" value="Enolase"/>
    <property type="match status" value="1"/>
</dbReference>
<dbReference type="PRINTS" id="PR00148">
    <property type="entry name" value="ENOLASE"/>
</dbReference>
<dbReference type="SFLD" id="SFLDS00001">
    <property type="entry name" value="Enolase"/>
    <property type="match status" value="1"/>
</dbReference>
<dbReference type="SFLD" id="SFLDF00002">
    <property type="entry name" value="enolase"/>
    <property type="match status" value="1"/>
</dbReference>
<dbReference type="SMART" id="SM01192">
    <property type="entry name" value="Enolase_C"/>
    <property type="match status" value="1"/>
</dbReference>
<dbReference type="SMART" id="SM01193">
    <property type="entry name" value="Enolase_N"/>
    <property type="match status" value="1"/>
</dbReference>
<dbReference type="SUPFAM" id="SSF51604">
    <property type="entry name" value="Enolase C-terminal domain-like"/>
    <property type="match status" value="1"/>
</dbReference>
<dbReference type="SUPFAM" id="SSF54826">
    <property type="entry name" value="Enolase N-terminal domain-like"/>
    <property type="match status" value="1"/>
</dbReference>
<dbReference type="PROSITE" id="PS00164">
    <property type="entry name" value="ENOLASE"/>
    <property type="match status" value="1"/>
</dbReference>
<sequence length="400" mass="43961">MNFEIKDTNIRKIFDSRGNFSAEVTVILENASGTASAPAGASTGKTEVIAYPDNNIDNGIDFFYRHVKKALKGFNSINQEGLDRMLHEIDGTDNFSNLGGNIATAISIANAKAVSNALGIPMYRYVGGINYSMPRPIGNVIGGGKHSKNGTTIQEFLVSAQGKTVLDSIYYNILIHRRIGEILSGMFKNQSIGLGDEKAWTCDISDEDAIEIIKNASKDISSEYKIKVLNGVDFAADSFYDGNYYIYKNRKLTRDQQIDYAISISRDHGFYYIEDPLNDQDFDGFSEITSKVGDKSLIVGDDLYTTNPERIKKGIEKRSTNGVLIKVNQIGTLSDTARSVRIATEHGLKTVVSHRSGETTDDFIAHLAVAFGSPLIKTGTIGGERLAKLNELIRIEEELI</sequence>
<proteinExistence type="inferred from homology"/>
<evidence type="ECO:0000255" key="1">
    <source>
        <dbReference type="HAMAP-Rule" id="MF_00318"/>
    </source>
</evidence>